<comment type="function">
    <text evidence="1">Catalyzes the reversible retro-aldol cleavage of 4-hydroxy-2-ketoheptane-1,7-dioate (HKHD) to pyruvate and succinic semialdehyde.</text>
</comment>
<comment type="catalytic activity">
    <reaction evidence="1">
        <text>4-hydroxy-2-oxoheptanedioate = succinate semialdehyde + pyruvate</text>
        <dbReference type="Rhea" id="RHEA:25788"/>
        <dbReference type="ChEBI" id="CHEBI:15361"/>
        <dbReference type="ChEBI" id="CHEBI:57706"/>
        <dbReference type="ChEBI" id="CHEBI:73036"/>
        <dbReference type="EC" id="4.1.2.52"/>
    </reaction>
</comment>
<comment type="cofactor">
    <cofactor evidence="1">
        <name>a divalent metal cation</name>
        <dbReference type="ChEBI" id="CHEBI:60240"/>
    </cofactor>
    <text evidence="1">Binds 1 divalent metal cation per subunit.</text>
</comment>
<comment type="pathway">
    <text evidence="1">Aromatic compound metabolism; 4-hydroxyphenylacetate degradation; pyruvate and succinate semialdehyde from 4-hydroxyphenylacetate: step 7/7.</text>
</comment>
<comment type="subunit">
    <text evidence="1">Homohexamer; trimer of dimers.</text>
</comment>
<comment type="similarity">
    <text evidence="1">Belongs to the HpcH/HpaI aldolase family.</text>
</comment>
<protein>
    <recommendedName>
        <fullName evidence="1">4-hydroxy-2-oxo-heptane-1,7-dioate aldolase</fullName>
        <ecNumber evidence="1">4.1.2.52</ecNumber>
    </recommendedName>
    <alternativeName>
        <fullName evidence="1">2,4-dihydroxyhept-2-ene-1,7-dioic acid aldolase</fullName>
        <shortName evidence="1">HHED aldolase</shortName>
    </alternativeName>
    <alternativeName>
        <fullName evidence="1">4-hydroxy-2-ketoheptane-1,7-dioate aldolase</fullName>
        <shortName evidence="1">HKHD aldolase</shortName>
    </alternativeName>
</protein>
<dbReference type="EC" id="4.1.2.52" evidence="1"/>
<dbReference type="EMBL" id="CP000038">
    <property type="protein sequence ID" value="AAZ90969.1"/>
    <property type="molecule type" value="Genomic_DNA"/>
</dbReference>
<dbReference type="RefSeq" id="WP_000431713.1">
    <property type="nucleotide sequence ID" value="NC_007384.1"/>
</dbReference>
<dbReference type="SMR" id="Q3YU43"/>
<dbReference type="GeneID" id="93777500"/>
<dbReference type="KEGG" id="ssn:SSON_4494"/>
<dbReference type="HOGENOM" id="CLU_059964_1_0_6"/>
<dbReference type="UniPathway" id="UPA00208">
    <property type="reaction ID" value="UER00422"/>
</dbReference>
<dbReference type="Proteomes" id="UP000002529">
    <property type="component" value="Chromosome"/>
</dbReference>
<dbReference type="GO" id="GO:0005737">
    <property type="term" value="C:cytoplasm"/>
    <property type="evidence" value="ECO:0007669"/>
    <property type="project" value="TreeGrafter"/>
</dbReference>
<dbReference type="GO" id="GO:0043863">
    <property type="term" value="F:4-hydroxy-2-ketopimelate aldolase activity"/>
    <property type="evidence" value="ECO:0007669"/>
    <property type="project" value="RHEA"/>
</dbReference>
<dbReference type="GO" id="GO:0046872">
    <property type="term" value="F:metal ion binding"/>
    <property type="evidence" value="ECO:0007669"/>
    <property type="project" value="UniProtKB-UniRule"/>
</dbReference>
<dbReference type="GO" id="GO:1901023">
    <property type="term" value="P:4-hydroxyphenylacetate catabolic process"/>
    <property type="evidence" value="ECO:0007669"/>
    <property type="project" value="UniProtKB-UniRule"/>
</dbReference>
<dbReference type="GO" id="GO:0010124">
    <property type="term" value="P:phenylacetate catabolic process"/>
    <property type="evidence" value="ECO:0007669"/>
    <property type="project" value="InterPro"/>
</dbReference>
<dbReference type="FunFam" id="3.20.20.60:FF:000004">
    <property type="entry name" value="5-keto-4-deoxy-D-glucarate aldolase"/>
    <property type="match status" value="1"/>
</dbReference>
<dbReference type="Gene3D" id="3.20.20.60">
    <property type="entry name" value="Phosphoenolpyruvate-binding domains"/>
    <property type="match status" value="1"/>
</dbReference>
<dbReference type="HAMAP" id="MF_01292">
    <property type="entry name" value="HKHD_aldolase"/>
    <property type="match status" value="1"/>
</dbReference>
<dbReference type="InterPro" id="IPR005000">
    <property type="entry name" value="Aldolase/citrate-lyase_domain"/>
</dbReference>
<dbReference type="InterPro" id="IPR023701">
    <property type="entry name" value="HKHD_aldolase_ent"/>
</dbReference>
<dbReference type="InterPro" id="IPR012689">
    <property type="entry name" value="HpaI"/>
</dbReference>
<dbReference type="InterPro" id="IPR050251">
    <property type="entry name" value="HpcH-HpaI_aldolase"/>
</dbReference>
<dbReference type="InterPro" id="IPR015813">
    <property type="entry name" value="Pyrv/PenolPyrv_kinase-like_dom"/>
</dbReference>
<dbReference type="InterPro" id="IPR040442">
    <property type="entry name" value="Pyrv_kinase-like_dom_sf"/>
</dbReference>
<dbReference type="NCBIfam" id="TIGR02311">
    <property type="entry name" value="HpaI"/>
    <property type="match status" value="1"/>
</dbReference>
<dbReference type="PANTHER" id="PTHR30502">
    <property type="entry name" value="2-KETO-3-DEOXY-L-RHAMNONATE ALDOLASE"/>
    <property type="match status" value="1"/>
</dbReference>
<dbReference type="PANTHER" id="PTHR30502:SF0">
    <property type="entry name" value="PHOSPHOENOLPYRUVATE CARBOXYLASE FAMILY PROTEIN"/>
    <property type="match status" value="1"/>
</dbReference>
<dbReference type="Pfam" id="PF03328">
    <property type="entry name" value="HpcH_HpaI"/>
    <property type="match status" value="1"/>
</dbReference>
<dbReference type="SUPFAM" id="SSF51621">
    <property type="entry name" value="Phosphoenolpyruvate/pyruvate domain"/>
    <property type="match status" value="1"/>
</dbReference>
<gene>
    <name evidence="1" type="primary">hpcH</name>
    <name evidence="1" type="synonym">hpaI</name>
    <name type="ordered locus">SSON_4494</name>
</gene>
<feature type="chain" id="PRO_0000355115" description="4-hydroxy-2-oxo-heptane-1,7-dioate aldolase">
    <location>
        <begin position="1"/>
        <end position="262"/>
    </location>
</feature>
<feature type="active site" description="Proton acceptor" evidence="1">
    <location>
        <position position="45"/>
    </location>
</feature>
<feature type="binding site" evidence="1">
    <location>
        <position position="147"/>
    </location>
    <ligand>
        <name>substrate</name>
    </ligand>
</feature>
<feature type="binding site" evidence="1">
    <location>
        <position position="149"/>
    </location>
    <ligand>
        <name>a divalent metal cation</name>
        <dbReference type="ChEBI" id="CHEBI:60240"/>
    </ligand>
</feature>
<feature type="binding site" evidence="1">
    <location>
        <position position="174"/>
    </location>
    <ligand>
        <name>substrate</name>
    </ligand>
</feature>
<feature type="binding site" evidence="1">
    <location>
        <position position="175"/>
    </location>
    <ligand>
        <name>a divalent metal cation</name>
        <dbReference type="ChEBI" id="CHEBI:60240"/>
    </ligand>
</feature>
<feature type="binding site" evidence="1">
    <location>
        <position position="175"/>
    </location>
    <ligand>
        <name>substrate</name>
    </ligand>
</feature>
<feature type="site" description="Transition state stabilizer" evidence="1">
    <location>
        <position position="70"/>
    </location>
</feature>
<feature type="site" description="Increases basicity of active site His" evidence="1">
    <location>
        <position position="84"/>
    </location>
</feature>
<name>HPCH_SHISS</name>
<sequence length="262" mass="28087">MENSFKAALKAGRPQIGLWLGLSSSYSAELLAGAGFDWLLIDGEHTPNNVQTVLTQLQAIAPYPSQPVVRPSWNDPVQIKQLLDVGTQTLLVPMVQNADEAREAVRATRYPPAGIRGVGSALARASRWNRIPDYLQKANDQMCVLVQIETREAMKNLPQILDVEGVDGVFIGPADLSADMGYAGNPQHPEVQAAIEQAIVQIREAGKAPGILIANEQLAKRYLELGALFVAVGVDTTLLARAAEALAARFGAQATAVKPGVY</sequence>
<proteinExistence type="inferred from homology"/>
<accession>Q3YU43</accession>
<organism>
    <name type="scientific">Shigella sonnei (strain Ss046)</name>
    <dbReference type="NCBI Taxonomy" id="300269"/>
    <lineage>
        <taxon>Bacteria</taxon>
        <taxon>Pseudomonadati</taxon>
        <taxon>Pseudomonadota</taxon>
        <taxon>Gammaproteobacteria</taxon>
        <taxon>Enterobacterales</taxon>
        <taxon>Enterobacteriaceae</taxon>
        <taxon>Shigella</taxon>
    </lineage>
</organism>
<evidence type="ECO:0000255" key="1">
    <source>
        <dbReference type="HAMAP-Rule" id="MF_01292"/>
    </source>
</evidence>
<keyword id="KW-0058">Aromatic hydrocarbons catabolism</keyword>
<keyword id="KW-0456">Lyase</keyword>
<keyword id="KW-0479">Metal-binding</keyword>
<keyword id="KW-1185">Reference proteome</keyword>
<reference key="1">
    <citation type="journal article" date="2005" name="Nucleic Acids Res.">
        <title>Genome dynamics and diversity of Shigella species, the etiologic agents of bacillary dysentery.</title>
        <authorList>
            <person name="Yang F."/>
            <person name="Yang J."/>
            <person name="Zhang X."/>
            <person name="Chen L."/>
            <person name="Jiang Y."/>
            <person name="Yan Y."/>
            <person name="Tang X."/>
            <person name="Wang J."/>
            <person name="Xiong Z."/>
            <person name="Dong J."/>
            <person name="Xue Y."/>
            <person name="Zhu Y."/>
            <person name="Xu X."/>
            <person name="Sun L."/>
            <person name="Chen S."/>
            <person name="Nie H."/>
            <person name="Peng J."/>
            <person name="Xu J."/>
            <person name="Wang Y."/>
            <person name="Yuan Z."/>
            <person name="Wen Y."/>
            <person name="Yao Z."/>
            <person name="Shen Y."/>
            <person name="Qiang B."/>
            <person name="Hou Y."/>
            <person name="Yu J."/>
            <person name="Jin Q."/>
        </authorList>
    </citation>
    <scope>NUCLEOTIDE SEQUENCE [LARGE SCALE GENOMIC DNA]</scope>
    <source>
        <strain>Ss046</strain>
    </source>
</reference>